<dbReference type="EMBL" id="L08907">
    <property type="protein sequence ID" value="AAA25016.1"/>
    <property type="molecule type" value="Genomic_DNA"/>
</dbReference>
<dbReference type="EMBL" id="AE000511">
    <property type="protein sequence ID" value="AAD07183.1"/>
    <property type="molecule type" value="Genomic_DNA"/>
</dbReference>
<dbReference type="PIR" id="C64534">
    <property type="entry name" value="C64534"/>
</dbReference>
<dbReference type="RefSeq" id="NP_206915.1">
    <property type="nucleotide sequence ID" value="NC_000915.1"/>
</dbReference>
<dbReference type="PDB" id="6LEA">
    <property type="method" value="X-ray"/>
    <property type="resolution" value="2.95 A"/>
    <property type="chains" value="E/F=416-514"/>
</dbReference>
<dbReference type="PDBsum" id="6LEA"/>
<dbReference type="SMR" id="Q07911"/>
<dbReference type="DIP" id="DIP-3194N"/>
<dbReference type="FunCoup" id="Q07911">
    <property type="interactions" value="82"/>
</dbReference>
<dbReference type="IntAct" id="Q07911">
    <property type="interactions" value="4"/>
</dbReference>
<dbReference type="MINT" id="Q07911"/>
<dbReference type="STRING" id="85962.HP_0115"/>
<dbReference type="PaxDb" id="85962-C694_00570"/>
<dbReference type="EnsemblBacteria" id="AAD07183">
    <property type="protein sequence ID" value="AAD07183"/>
    <property type="gene ID" value="HP_0115"/>
</dbReference>
<dbReference type="KEGG" id="hpy:HP_0115"/>
<dbReference type="PATRIC" id="fig|85962.8.peg.122"/>
<dbReference type="eggNOG" id="COG1344">
    <property type="taxonomic scope" value="Bacteria"/>
</dbReference>
<dbReference type="InParanoid" id="Q07911"/>
<dbReference type="OrthoDB" id="9796789at2"/>
<dbReference type="PhylomeDB" id="Q07911"/>
<dbReference type="Proteomes" id="UP000000429">
    <property type="component" value="Chromosome"/>
</dbReference>
<dbReference type="GO" id="GO:0009288">
    <property type="term" value="C:bacterial-type flagellum"/>
    <property type="evidence" value="ECO:0007669"/>
    <property type="project" value="UniProtKB-SubCell"/>
</dbReference>
<dbReference type="GO" id="GO:0005576">
    <property type="term" value="C:extracellular region"/>
    <property type="evidence" value="ECO:0007669"/>
    <property type="project" value="UniProtKB-SubCell"/>
</dbReference>
<dbReference type="GO" id="GO:0005198">
    <property type="term" value="F:structural molecule activity"/>
    <property type="evidence" value="ECO:0007669"/>
    <property type="project" value="InterPro"/>
</dbReference>
<dbReference type="Gene3D" id="3.30.70.2120">
    <property type="match status" value="1"/>
</dbReference>
<dbReference type="Gene3D" id="1.20.1330.10">
    <property type="entry name" value="f41 fragment of flagellin, N-terminal domain"/>
    <property type="match status" value="1"/>
</dbReference>
<dbReference type="Gene3D" id="6.10.10.10">
    <property type="entry name" value="Flagellar export chaperone, C-terminal domain"/>
    <property type="match status" value="1"/>
</dbReference>
<dbReference type="InterPro" id="IPR001492">
    <property type="entry name" value="Flagellin"/>
</dbReference>
<dbReference type="InterPro" id="IPR046358">
    <property type="entry name" value="Flagellin_C"/>
</dbReference>
<dbReference type="InterPro" id="IPR042187">
    <property type="entry name" value="Flagellin_C_sub2"/>
</dbReference>
<dbReference type="InterPro" id="IPR010810">
    <property type="entry name" value="Flagellin_hook_IN_motif"/>
</dbReference>
<dbReference type="InterPro" id="IPR001029">
    <property type="entry name" value="Flagellin_N"/>
</dbReference>
<dbReference type="NCBIfam" id="NF010115">
    <property type="entry name" value="PRK13588.1"/>
    <property type="match status" value="1"/>
</dbReference>
<dbReference type="PANTHER" id="PTHR42792">
    <property type="entry name" value="FLAGELLIN"/>
    <property type="match status" value="1"/>
</dbReference>
<dbReference type="PANTHER" id="PTHR42792:SF2">
    <property type="entry name" value="FLAGELLIN"/>
    <property type="match status" value="1"/>
</dbReference>
<dbReference type="Pfam" id="PF00700">
    <property type="entry name" value="Flagellin_C"/>
    <property type="match status" value="1"/>
</dbReference>
<dbReference type="Pfam" id="PF07196">
    <property type="entry name" value="Flagellin_IN"/>
    <property type="match status" value="2"/>
</dbReference>
<dbReference type="Pfam" id="PF00669">
    <property type="entry name" value="Flagellin_N"/>
    <property type="match status" value="1"/>
</dbReference>
<dbReference type="PRINTS" id="PR00207">
    <property type="entry name" value="FLAGELLIN"/>
</dbReference>
<dbReference type="SUPFAM" id="SSF64518">
    <property type="entry name" value="Phase 1 flagellin"/>
    <property type="match status" value="1"/>
</dbReference>
<proteinExistence type="evidence at protein level"/>
<keyword id="KW-0002">3D-structure</keyword>
<keyword id="KW-0975">Bacterial flagellum</keyword>
<keyword id="KW-0903">Direct protein sequencing</keyword>
<keyword id="KW-1185">Reference proteome</keyword>
<keyword id="KW-0964">Secreted</keyword>
<keyword id="KW-0843">Virulence</keyword>
<organism>
    <name type="scientific">Helicobacter pylori (strain ATCC 700392 / 26695)</name>
    <name type="common">Campylobacter pylori</name>
    <dbReference type="NCBI Taxonomy" id="85962"/>
    <lineage>
        <taxon>Bacteria</taxon>
        <taxon>Pseudomonadati</taxon>
        <taxon>Campylobacterota</taxon>
        <taxon>Epsilonproteobacteria</taxon>
        <taxon>Campylobacterales</taxon>
        <taxon>Helicobacteraceae</taxon>
        <taxon>Helicobacter</taxon>
    </lineage>
</organism>
<comment type="function">
    <text>Flagellin is the subunit protein which polymerizes to form the filaments of bacterial flagella. Important for motility and virulence.</text>
</comment>
<comment type="subunit">
    <text>Heteromer of FlaA and FlaB. FlaB is located proximal to the hook while the remainder of the filament is composed of the predominant FlaA.</text>
</comment>
<comment type="interaction">
    <interactant intactId="EBI-7500186">
        <id>Q07911</id>
    </interactant>
    <interactant intactId="EBI-7499990">
        <id>O25448</id>
        <label>HP_0753</label>
    </interactant>
    <organismsDiffer>false</organismsDiffer>
    <experiments>5</experiments>
</comment>
<comment type="subcellular location">
    <subcellularLocation>
        <location>Secreted</location>
    </subcellularLocation>
    <subcellularLocation>
        <location>Bacterial flagellum</location>
    </subcellularLocation>
</comment>
<comment type="similarity">
    <text evidence="2">Belongs to the bacterial flagellin family.</text>
</comment>
<name>FLAB_HELPY</name>
<reference key="1">
    <citation type="journal article" date="1993" name="J. Bacteriol.">
        <title>Cloning and genetic characterization of the Helicobacter pylori and Helicobacter mustelae flaB flagellin genes and construction of H. pylori flaA- and flaB-negative mutants by electroporation-mediated allelic exchange.</title>
        <authorList>
            <person name="Suerbaum S."/>
            <person name="Josenhans C."/>
            <person name="Labigne A."/>
        </authorList>
    </citation>
    <scope>NUCLEOTIDE SEQUENCE [GENOMIC DNA]</scope>
    <source>
        <strain>85P</strain>
    </source>
</reference>
<reference key="2">
    <citation type="journal article" date="1997" name="Nature">
        <title>The complete genome sequence of the gastric pathogen Helicobacter pylori.</title>
        <authorList>
            <person name="Tomb J.-F."/>
            <person name="White O."/>
            <person name="Kerlavage A.R."/>
            <person name="Clayton R.A."/>
            <person name="Sutton G.G."/>
            <person name="Fleischmann R.D."/>
            <person name="Ketchum K.A."/>
            <person name="Klenk H.-P."/>
            <person name="Gill S.R."/>
            <person name="Dougherty B.A."/>
            <person name="Nelson K.E."/>
            <person name="Quackenbush J."/>
            <person name="Zhou L."/>
            <person name="Kirkness E.F."/>
            <person name="Peterson S.N."/>
            <person name="Loftus B.J."/>
            <person name="Richardson D.L."/>
            <person name="Dodson R.J."/>
            <person name="Khalak H.G."/>
            <person name="Glodek A."/>
            <person name="McKenney K."/>
            <person name="FitzGerald L.M."/>
            <person name="Lee N."/>
            <person name="Adams M.D."/>
            <person name="Hickey E.K."/>
            <person name="Berg D.E."/>
            <person name="Gocayne J.D."/>
            <person name="Utterback T.R."/>
            <person name="Peterson J.D."/>
            <person name="Kelley J.M."/>
            <person name="Cotton M.D."/>
            <person name="Weidman J.F."/>
            <person name="Fujii C."/>
            <person name="Bowman C."/>
            <person name="Watthey L."/>
            <person name="Wallin E."/>
            <person name="Hayes W.S."/>
            <person name="Borodovsky M."/>
            <person name="Karp P.D."/>
            <person name="Smith H.O."/>
            <person name="Fraser C.M."/>
            <person name="Venter J.C."/>
        </authorList>
    </citation>
    <scope>NUCLEOTIDE SEQUENCE [LARGE SCALE GENOMIC DNA]</scope>
    <source>
        <strain>ATCC 700392 / 26695</strain>
    </source>
</reference>
<reference key="3">
    <citation type="journal article" date="1991" name="J. Bacteriol.">
        <title>Identification, characterization, and spatial localization of two flagellin species in Helicobacter pylori flagella.</title>
        <authorList>
            <person name="Kostrzynska M."/>
            <person name="Betts J.D."/>
            <person name="Austin J.W."/>
            <person name="Trust T.J."/>
        </authorList>
    </citation>
    <scope>PROTEIN SEQUENCE OF 2-21</scope>
    <source>
        <strain>NTCC 11637 / Isolate 915</strain>
    </source>
</reference>
<feature type="initiator methionine" description="Removed" evidence="1">
    <location>
        <position position="1"/>
    </location>
</feature>
<feature type="chain" id="PRO_0000182612" description="Flagellin B">
    <location>
        <begin position="2"/>
        <end position="514"/>
    </location>
</feature>
<feature type="sequence variant" description="In strain: 85P.">
    <original>A</original>
    <variation>T</variation>
    <location>
        <position position="155"/>
    </location>
</feature>
<feature type="sequence variant" description="In strain: 85P.">
    <original>A</original>
    <variation>E</variation>
    <location>
        <position position="182"/>
    </location>
</feature>
<feature type="sequence variant" description="In strain: 85P.">
    <original>AQ</original>
    <variation>GA</variation>
    <location>
        <begin position="190"/>
        <end position="191"/>
    </location>
</feature>
<feature type="sequence variant" description="In strain: 85P.">
    <original>A</original>
    <variation>T</variation>
    <location>
        <position position="335"/>
    </location>
</feature>
<feature type="helix" evidence="3">
    <location>
        <begin position="478"/>
        <end position="483"/>
    </location>
</feature>
<feature type="helix" evidence="3">
    <location>
        <begin position="487"/>
        <end position="491"/>
    </location>
</feature>
<feature type="strand" evidence="3">
    <location>
        <begin position="493"/>
        <end position="495"/>
    </location>
</feature>
<feature type="helix" evidence="3">
    <location>
        <begin position="497"/>
        <end position="501"/>
    </location>
</feature>
<feature type="helix" evidence="3">
    <location>
        <begin position="506"/>
        <end position="513"/>
    </location>
</feature>
<accession>Q07911</accession>
<evidence type="ECO:0000269" key="1">
    <source>
    </source>
</evidence>
<evidence type="ECO:0000305" key="2"/>
<evidence type="ECO:0007829" key="3">
    <source>
        <dbReference type="PDB" id="6LEA"/>
    </source>
</evidence>
<sequence length="514" mass="53882">MSFRINTNIAALTSHAVGVQNNRDLSSSLEKLSSGLRINKAADDSSGMAIADSLRSQSANLGQAIRNANDAIGMVQTADKAMDEQIKILDTIKTKAVQAAQDGQTLESRRALQSDIQRLLEELDNIANTTSFNGQQMLSGSFSNKEFQIGAYSNATVKASIGSTSSDKIGHVRMETSSFSGAGMLASAAAQNLTEVGLNFKQVNGVNDYKIETVRISTSAGTGIGALSEIINRFSNTLGVRASYNVMATGGTPVQSGTVRELTINGVEIGTVNDVHKNDADGRLTNAINSVKDRTGVEASLDIQGRINLHSIDGRAISVHAASASGQVFGGGNFAGISGTQHAVIGRLTLTRTDARDIIVSGVNFSHVGFHSAQGVAEYTVNLRAVRGIFDANVASAAGANANGAQAETNSQGIGAGVTSLKGAMIVMDMADSARTQLDKIRSDMGSVQMELVTTINNISVTQVNVKAAESQIRDVDFAEESANFSKYNILAQSGSFAMAQANAVQQNVLRLLQ</sequence>
<gene>
    <name type="primary">flaB</name>
    <name type="ordered locus">HP_0115</name>
</gene>
<protein>
    <recommendedName>
        <fullName>Flagellin B</fullName>
    </recommendedName>
    <alternativeName>
        <fullName>Flagellin N</fullName>
    </alternativeName>
</protein>